<reference key="1">
    <citation type="journal article" date="2006" name="J. Bacteriol.">
        <title>Pathogenomic sequence analysis of Bacillus cereus and Bacillus thuringiensis isolates closely related to Bacillus anthracis.</title>
        <authorList>
            <person name="Han C.S."/>
            <person name="Xie G."/>
            <person name="Challacombe J.F."/>
            <person name="Altherr M.R."/>
            <person name="Bhotika S.S."/>
            <person name="Bruce D."/>
            <person name="Campbell C.S."/>
            <person name="Campbell M.L."/>
            <person name="Chen J."/>
            <person name="Chertkov O."/>
            <person name="Cleland C."/>
            <person name="Dimitrijevic M."/>
            <person name="Doggett N.A."/>
            <person name="Fawcett J.J."/>
            <person name="Glavina T."/>
            <person name="Goodwin L.A."/>
            <person name="Hill K.K."/>
            <person name="Hitchcock P."/>
            <person name="Jackson P.J."/>
            <person name="Keim P."/>
            <person name="Kewalramani A.R."/>
            <person name="Longmire J."/>
            <person name="Lucas S."/>
            <person name="Malfatti S."/>
            <person name="McMurry K."/>
            <person name="Meincke L.J."/>
            <person name="Misra M."/>
            <person name="Moseman B.L."/>
            <person name="Mundt M."/>
            <person name="Munk A.C."/>
            <person name="Okinaka R.T."/>
            <person name="Parson-Quintana B."/>
            <person name="Reilly L.P."/>
            <person name="Richardson P."/>
            <person name="Robinson D.L."/>
            <person name="Rubin E."/>
            <person name="Saunders E."/>
            <person name="Tapia R."/>
            <person name="Tesmer J.G."/>
            <person name="Thayer N."/>
            <person name="Thompson L.S."/>
            <person name="Tice H."/>
            <person name="Ticknor L.O."/>
            <person name="Wills P.L."/>
            <person name="Brettin T.S."/>
            <person name="Gilna P."/>
        </authorList>
    </citation>
    <scope>NUCLEOTIDE SEQUENCE [LARGE SCALE GENOMIC DNA]</scope>
    <source>
        <strain>97-27</strain>
    </source>
</reference>
<accession>Q6HPL3</accession>
<comment type="function">
    <text evidence="1">Catalyzes the conversion of glucosamine-6-phosphate to glucosamine-1-phosphate.</text>
</comment>
<comment type="catalytic activity">
    <reaction evidence="1">
        <text>alpha-D-glucosamine 1-phosphate = D-glucosamine 6-phosphate</text>
        <dbReference type="Rhea" id="RHEA:23424"/>
        <dbReference type="ChEBI" id="CHEBI:58516"/>
        <dbReference type="ChEBI" id="CHEBI:58725"/>
        <dbReference type="EC" id="5.4.2.10"/>
    </reaction>
</comment>
<comment type="cofactor">
    <cofactor evidence="1">
        <name>Mg(2+)</name>
        <dbReference type="ChEBI" id="CHEBI:18420"/>
    </cofactor>
    <text evidence="1">Binds 1 Mg(2+) ion per subunit.</text>
</comment>
<comment type="PTM">
    <text evidence="1">Activated by phosphorylation.</text>
</comment>
<comment type="similarity">
    <text evidence="1">Belongs to the phosphohexose mutase family.</text>
</comment>
<gene>
    <name evidence="1" type="primary">glmM</name>
    <name type="ordered locus">BT9727_0152</name>
</gene>
<keyword id="KW-0413">Isomerase</keyword>
<keyword id="KW-0460">Magnesium</keyword>
<keyword id="KW-0479">Metal-binding</keyword>
<keyword id="KW-0597">Phosphoprotein</keyword>
<organism>
    <name type="scientific">Bacillus thuringiensis subsp. konkukian (strain 97-27)</name>
    <dbReference type="NCBI Taxonomy" id="281309"/>
    <lineage>
        <taxon>Bacteria</taxon>
        <taxon>Bacillati</taxon>
        <taxon>Bacillota</taxon>
        <taxon>Bacilli</taxon>
        <taxon>Bacillales</taxon>
        <taxon>Bacillaceae</taxon>
        <taxon>Bacillus</taxon>
        <taxon>Bacillus cereus group</taxon>
    </lineage>
</organism>
<name>GLMM_BACHK</name>
<sequence length="448" mass="48417">MGKYFGTDGVRGVANKELTPELAFKIGRFGGYVLTKDTDRPKVIIGRDTRISGHMLEGALVAGLLSTGAEVMRLGVISTPGVAYLTKALDAQAGVMISASHNPVQDNGIKFFGSDGFKLTDEQEAEIEALLDKEVDELPRPTGTNLGQVSDYFEGGQKYLQYIKQTVEEDFSGLHIALDCAHGATSSLAPYLFADLEADISTMGTSPNGMNINDGVGSTHPEVLAELVKEKGADIGLAFDGDGDRLIAVDEKGNIVDGDQIMFICAKYMKETGQLKHNTVVSTVMSNLGFYKALEANGITSDKTAVGDRYVMEEMKRGGYNLGGEQSGHIILLDYITTGDGMLSALQLVNIMKMTKKPLSELAGEMTKFPQLLVNVRVTDKKLALENEKIKEIIRVVEEEMNGDGRILVRPSGTEPLIRVMAEAPTQEVCDAYVHRIVEVVKAEVGAE</sequence>
<dbReference type="EC" id="5.4.2.10" evidence="1"/>
<dbReference type="EMBL" id="AE017355">
    <property type="protein sequence ID" value="AAT58927.1"/>
    <property type="molecule type" value="Genomic_DNA"/>
</dbReference>
<dbReference type="RefSeq" id="WP_000521474.1">
    <property type="nucleotide sequence ID" value="NC_005957.1"/>
</dbReference>
<dbReference type="RefSeq" id="YP_034507.1">
    <property type="nucleotide sequence ID" value="NC_005957.1"/>
</dbReference>
<dbReference type="SMR" id="Q6HPL3"/>
<dbReference type="GeneID" id="75083449"/>
<dbReference type="KEGG" id="btk:BT9727_0152"/>
<dbReference type="PATRIC" id="fig|281309.8.peg.154"/>
<dbReference type="HOGENOM" id="CLU_016950_7_0_9"/>
<dbReference type="Proteomes" id="UP000001301">
    <property type="component" value="Chromosome"/>
</dbReference>
<dbReference type="GO" id="GO:0005829">
    <property type="term" value="C:cytosol"/>
    <property type="evidence" value="ECO:0007669"/>
    <property type="project" value="TreeGrafter"/>
</dbReference>
<dbReference type="GO" id="GO:0000287">
    <property type="term" value="F:magnesium ion binding"/>
    <property type="evidence" value="ECO:0007669"/>
    <property type="project" value="UniProtKB-UniRule"/>
</dbReference>
<dbReference type="GO" id="GO:0008966">
    <property type="term" value="F:phosphoglucosamine mutase activity"/>
    <property type="evidence" value="ECO:0007669"/>
    <property type="project" value="UniProtKB-UniRule"/>
</dbReference>
<dbReference type="GO" id="GO:0004615">
    <property type="term" value="F:phosphomannomutase activity"/>
    <property type="evidence" value="ECO:0007669"/>
    <property type="project" value="TreeGrafter"/>
</dbReference>
<dbReference type="GO" id="GO:0005975">
    <property type="term" value="P:carbohydrate metabolic process"/>
    <property type="evidence" value="ECO:0007669"/>
    <property type="project" value="InterPro"/>
</dbReference>
<dbReference type="GO" id="GO:0009252">
    <property type="term" value="P:peptidoglycan biosynthetic process"/>
    <property type="evidence" value="ECO:0007669"/>
    <property type="project" value="TreeGrafter"/>
</dbReference>
<dbReference type="GO" id="GO:0006048">
    <property type="term" value="P:UDP-N-acetylglucosamine biosynthetic process"/>
    <property type="evidence" value="ECO:0007669"/>
    <property type="project" value="TreeGrafter"/>
</dbReference>
<dbReference type="CDD" id="cd05802">
    <property type="entry name" value="GlmM"/>
    <property type="match status" value="1"/>
</dbReference>
<dbReference type="FunFam" id="3.30.310.50:FF:000001">
    <property type="entry name" value="Phosphoglucosamine mutase"/>
    <property type="match status" value="1"/>
</dbReference>
<dbReference type="FunFam" id="3.40.120.10:FF:000001">
    <property type="entry name" value="Phosphoglucosamine mutase"/>
    <property type="match status" value="1"/>
</dbReference>
<dbReference type="FunFam" id="3.40.120.10:FF:000002">
    <property type="entry name" value="Phosphoglucosamine mutase"/>
    <property type="match status" value="1"/>
</dbReference>
<dbReference type="Gene3D" id="3.40.120.10">
    <property type="entry name" value="Alpha-D-Glucose-1,6-Bisphosphate, subunit A, domain 3"/>
    <property type="match status" value="3"/>
</dbReference>
<dbReference type="Gene3D" id="3.30.310.50">
    <property type="entry name" value="Alpha-D-phosphohexomutase, C-terminal domain"/>
    <property type="match status" value="1"/>
</dbReference>
<dbReference type="HAMAP" id="MF_01554_B">
    <property type="entry name" value="GlmM_B"/>
    <property type="match status" value="1"/>
</dbReference>
<dbReference type="InterPro" id="IPR005844">
    <property type="entry name" value="A-D-PHexomutase_a/b/a-I"/>
</dbReference>
<dbReference type="InterPro" id="IPR016055">
    <property type="entry name" value="A-D-PHexomutase_a/b/a-I/II/III"/>
</dbReference>
<dbReference type="InterPro" id="IPR005845">
    <property type="entry name" value="A-D-PHexomutase_a/b/a-II"/>
</dbReference>
<dbReference type="InterPro" id="IPR005846">
    <property type="entry name" value="A-D-PHexomutase_a/b/a-III"/>
</dbReference>
<dbReference type="InterPro" id="IPR005843">
    <property type="entry name" value="A-D-PHexomutase_C"/>
</dbReference>
<dbReference type="InterPro" id="IPR036900">
    <property type="entry name" value="A-D-PHexomutase_C_sf"/>
</dbReference>
<dbReference type="InterPro" id="IPR016066">
    <property type="entry name" value="A-D-PHexomutase_CS"/>
</dbReference>
<dbReference type="InterPro" id="IPR005841">
    <property type="entry name" value="Alpha-D-phosphohexomutase_SF"/>
</dbReference>
<dbReference type="InterPro" id="IPR006352">
    <property type="entry name" value="GlmM_bact"/>
</dbReference>
<dbReference type="InterPro" id="IPR050060">
    <property type="entry name" value="Phosphoglucosamine_mutase"/>
</dbReference>
<dbReference type="NCBIfam" id="TIGR01455">
    <property type="entry name" value="glmM"/>
    <property type="match status" value="1"/>
</dbReference>
<dbReference type="NCBIfam" id="NF008139">
    <property type="entry name" value="PRK10887.1"/>
    <property type="match status" value="1"/>
</dbReference>
<dbReference type="PANTHER" id="PTHR42946:SF1">
    <property type="entry name" value="PHOSPHOGLUCOMUTASE (ALPHA-D-GLUCOSE-1,6-BISPHOSPHATE-DEPENDENT)"/>
    <property type="match status" value="1"/>
</dbReference>
<dbReference type="PANTHER" id="PTHR42946">
    <property type="entry name" value="PHOSPHOHEXOSE MUTASE"/>
    <property type="match status" value="1"/>
</dbReference>
<dbReference type="Pfam" id="PF02878">
    <property type="entry name" value="PGM_PMM_I"/>
    <property type="match status" value="1"/>
</dbReference>
<dbReference type="Pfam" id="PF02879">
    <property type="entry name" value="PGM_PMM_II"/>
    <property type="match status" value="1"/>
</dbReference>
<dbReference type="Pfam" id="PF02880">
    <property type="entry name" value="PGM_PMM_III"/>
    <property type="match status" value="1"/>
</dbReference>
<dbReference type="Pfam" id="PF00408">
    <property type="entry name" value="PGM_PMM_IV"/>
    <property type="match status" value="1"/>
</dbReference>
<dbReference type="PRINTS" id="PR00509">
    <property type="entry name" value="PGMPMM"/>
</dbReference>
<dbReference type="SUPFAM" id="SSF55957">
    <property type="entry name" value="Phosphoglucomutase, C-terminal domain"/>
    <property type="match status" value="1"/>
</dbReference>
<dbReference type="SUPFAM" id="SSF53738">
    <property type="entry name" value="Phosphoglucomutase, first 3 domains"/>
    <property type="match status" value="3"/>
</dbReference>
<dbReference type="PROSITE" id="PS00710">
    <property type="entry name" value="PGM_PMM"/>
    <property type="match status" value="1"/>
</dbReference>
<proteinExistence type="inferred from homology"/>
<protein>
    <recommendedName>
        <fullName evidence="1">Phosphoglucosamine mutase</fullName>
        <ecNumber evidence="1">5.4.2.10</ecNumber>
    </recommendedName>
</protein>
<evidence type="ECO:0000255" key="1">
    <source>
        <dbReference type="HAMAP-Rule" id="MF_01554"/>
    </source>
</evidence>
<feature type="chain" id="PRO_0000147847" description="Phosphoglucosamine mutase">
    <location>
        <begin position="1"/>
        <end position="448"/>
    </location>
</feature>
<feature type="active site" description="Phosphoserine intermediate" evidence="1">
    <location>
        <position position="100"/>
    </location>
</feature>
<feature type="binding site" description="via phosphate group" evidence="1">
    <location>
        <position position="100"/>
    </location>
    <ligand>
        <name>Mg(2+)</name>
        <dbReference type="ChEBI" id="CHEBI:18420"/>
    </ligand>
</feature>
<feature type="binding site" evidence="1">
    <location>
        <position position="240"/>
    </location>
    <ligand>
        <name>Mg(2+)</name>
        <dbReference type="ChEBI" id="CHEBI:18420"/>
    </ligand>
</feature>
<feature type="binding site" evidence="1">
    <location>
        <position position="242"/>
    </location>
    <ligand>
        <name>Mg(2+)</name>
        <dbReference type="ChEBI" id="CHEBI:18420"/>
    </ligand>
</feature>
<feature type="binding site" evidence="1">
    <location>
        <position position="244"/>
    </location>
    <ligand>
        <name>Mg(2+)</name>
        <dbReference type="ChEBI" id="CHEBI:18420"/>
    </ligand>
</feature>
<feature type="modified residue" description="Phosphoserine" evidence="1">
    <location>
        <position position="100"/>
    </location>
</feature>